<evidence type="ECO:0000250" key="1"/>
<evidence type="ECO:0000256" key="2">
    <source>
        <dbReference type="SAM" id="MobiDB-lite"/>
    </source>
</evidence>
<evidence type="ECO:0000305" key="3"/>
<comment type="function">
    <text evidence="1">Involved both in the piRNA and miRNA metabolic processes. As a component of the meiotic nuage, plays a central role during oogenesis by repressing transposable elements and preventing their mobilization, which is essential for the germline integrity. Repression of transposable elements is mediated via the piRNA metabolic process, which mediates the repression of transposable elements during meiosis by forming complexes composed of piRNAs and Piwi proteins and governs the repression of transposons. As a nuclear component, it is required for proper differentiation in the germline stem cell (GSC) lineage by repressing microRNA-7 (miR-7), thereby acting as an indirect regulator of bag-of-marbles (Bam). Acts by binding to the promoter of miR-7 gene and repressing its expression; miR-7 repression alleviates the Bam repression by miR-7, thereby allowing differentiation in the germline stem cell (GSC) lineage (By similarity).</text>
</comment>
<comment type="subcellular location">
    <subcellularLocation>
        <location>Cytoplasm</location>
    </subcellularLocation>
    <subcellularLocation>
        <location>Nucleus</location>
    </subcellularLocation>
    <text evidence="1">Component of the meiotic nuage, also named P granule, a germ-cell-specific organelle required to repress transposon activity during meiosis.</text>
</comment>
<comment type="similarity">
    <text evidence="3">Belongs to the maelstrom family.</text>
</comment>
<comment type="sequence caution" evidence="3">
    <conflict type="erroneous initiation">
        <sequence resource="EMBL-CDS" id="EDW39169"/>
    </conflict>
</comment>
<sequence length="438" mass="49768">MAPKKRNGFMTFVKEWQANNPVARGLSNSEAVAKCDPIWKSMGDQERGPYNSMAKNANVLERTAKKERLNCLGGSVAEMEIEKNEAISAELQMKRKIERIILTAKNSMELENEEFVFVSFNYFTKALTGDIYVPAEFSACRYSLKGGISSNYSTMINPGHIIYGQSRDAQDHSKTTHKLPLPPQAFGETNMGKLYIDIFNWLSVRNEEKLDQDPVIVYTTPELMPVVKSCFRYLASEAEIDEDERKIMVFDIHHLFYTLKKSVLDVAGVTNDRINFHVTNNFFVKDFFEYTEGISCDYHEKIDRSKYCTNSMVKRWGFTFSDYMCADLAIPLQPGKHIPLKVKPNYTITPASSSTNFDEISLDSYYSAPPRIQKEMGSRDLSPSSSHQSVSRAYVPRDHSVYGGTLDSDEEFPSLGGRRRQLPDKSHFNMGAGKKIAR</sequence>
<keyword id="KW-0963">Cytoplasm</keyword>
<keyword id="KW-0217">Developmental protein</keyword>
<keyword id="KW-0221">Differentiation</keyword>
<keyword id="KW-0238">DNA-binding</keyword>
<keyword id="KW-0469">Meiosis</keyword>
<keyword id="KW-0539">Nucleus</keyword>
<keyword id="KW-0896">Oogenesis</keyword>
<keyword id="KW-1185">Reference proteome</keyword>
<keyword id="KW-0678">Repressor</keyword>
<keyword id="KW-0943">RNA-mediated gene silencing</keyword>
<keyword id="KW-0804">Transcription</keyword>
<keyword id="KW-0805">Transcription regulation</keyword>
<proteinExistence type="inferred from homology"/>
<accession>B4GN43</accession>
<dbReference type="EMBL" id="CH479186">
    <property type="protein sequence ID" value="EDW39169.1"/>
    <property type="status" value="ALT_INIT"/>
    <property type="molecule type" value="Genomic_DNA"/>
</dbReference>
<dbReference type="RefSeq" id="XP_002020357.1">
    <property type="nucleotide sequence ID" value="XM_002020321.1"/>
</dbReference>
<dbReference type="SMR" id="B4GN43"/>
<dbReference type="EnsemblMetazoa" id="FBtr0179167">
    <property type="protein sequence ID" value="FBpp0177659"/>
    <property type="gene ID" value="FBgn0151157"/>
</dbReference>
<dbReference type="EnsemblMetazoa" id="XM_002020321.2">
    <property type="protein sequence ID" value="XP_002020357.2"/>
    <property type="gene ID" value="LOC6595291"/>
</dbReference>
<dbReference type="EnsemblMetazoa" id="XM_026993421.1">
    <property type="protein sequence ID" value="XP_026849222.1"/>
    <property type="gene ID" value="LOC113566689"/>
</dbReference>
<dbReference type="GeneID" id="6595291"/>
<dbReference type="KEGG" id="dpe:6595291"/>
<dbReference type="eggNOG" id="ENOG502QTQB">
    <property type="taxonomic scope" value="Eukaryota"/>
</dbReference>
<dbReference type="OrthoDB" id="24555at2759"/>
<dbReference type="Proteomes" id="UP000008744">
    <property type="component" value="Unassembled WGS sequence"/>
</dbReference>
<dbReference type="GO" id="GO:0005737">
    <property type="term" value="C:cytoplasm"/>
    <property type="evidence" value="ECO:0000250"/>
    <property type="project" value="UniProtKB"/>
</dbReference>
<dbReference type="GO" id="GO:0005634">
    <property type="term" value="C:nucleus"/>
    <property type="evidence" value="ECO:0000250"/>
    <property type="project" value="UniProtKB"/>
</dbReference>
<dbReference type="GO" id="GO:0043186">
    <property type="term" value="C:P granule"/>
    <property type="evidence" value="ECO:0000250"/>
    <property type="project" value="UniProtKB"/>
</dbReference>
<dbReference type="GO" id="GO:0048471">
    <property type="term" value="C:perinuclear region of cytoplasm"/>
    <property type="evidence" value="ECO:0000250"/>
    <property type="project" value="UniProtKB"/>
</dbReference>
<dbReference type="GO" id="GO:0000976">
    <property type="term" value="F:transcription cis-regulatory region binding"/>
    <property type="evidence" value="ECO:0000250"/>
    <property type="project" value="UniProtKB"/>
</dbReference>
<dbReference type="GO" id="GO:0030718">
    <property type="term" value="P:germ-line stem cell population maintenance"/>
    <property type="evidence" value="ECO:0000250"/>
    <property type="project" value="UniProtKB"/>
</dbReference>
<dbReference type="GO" id="GO:0007140">
    <property type="term" value="P:male meiotic nuclear division"/>
    <property type="evidence" value="ECO:0007669"/>
    <property type="project" value="TreeGrafter"/>
</dbReference>
<dbReference type="GO" id="GO:0045892">
    <property type="term" value="P:negative regulation of DNA-templated transcription"/>
    <property type="evidence" value="ECO:0000250"/>
    <property type="project" value="UniProtKB"/>
</dbReference>
<dbReference type="GO" id="GO:0048477">
    <property type="term" value="P:oogenesis"/>
    <property type="evidence" value="ECO:0007669"/>
    <property type="project" value="UniProtKB-KW"/>
</dbReference>
<dbReference type="GO" id="GO:0034587">
    <property type="term" value="P:piRNA processing"/>
    <property type="evidence" value="ECO:0000250"/>
    <property type="project" value="UniProtKB"/>
</dbReference>
<dbReference type="GO" id="GO:0060964">
    <property type="term" value="P:regulation of miRNA-mediated gene silencing"/>
    <property type="evidence" value="ECO:0007669"/>
    <property type="project" value="InterPro"/>
</dbReference>
<dbReference type="GO" id="GO:0031047">
    <property type="term" value="P:regulatory ncRNA-mediated gene silencing"/>
    <property type="evidence" value="ECO:0000250"/>
    <property type="project" value="UniProtKB"/>
</dbReference>
<dbReference type="GO" id="GO:0007283">
    <property type="term" value="P:spermatogenesis"/>
    <property type="evidence" value="ECO:0000250"/>
    <property type="project" value="UniProtKB"/>
</dbReference>
<dbReference type="FunFam" id="1.10.30.10:FF:000057">
    <property type="entry name" value="Protein maelstrom 2"/>
    <property type="match status" value="1"/>
</dbReference>
<dbReference type="Gene3D" id="1.10.30.10">
    <property type="entry name" value="High mobility group box domain"/>
    <property type="match status" value="1"/>
</dbReference>
<dbReference type="InterPro" id="IPR036910">
    <property type="entry name" value="HMG_box_dom_sf"/>
</dbReference>
<dbReference type="InterPro" id="IPR024970">
    <property type="entry name" value="Maelstrom"/>
</dbReference>
<dbReference type="InterPro" id="IPR039259">
    <property type="entry name" value="Protein_maelstrom"/>
</dbReference>
<dbReference type="PANTHER" id="PTHR21358">
    <property type="entry name" value="PROTEIN MAELSTROM HOMOLOG"/>
    <property type="match status" value="1"/>
</dbReference>
<dbReference type="PANTHER" id="PTHR21358:SF4">
    <property type="entry name" value="PROTEIN MAELSTROM HOMOLOG"/>
    <property type="match status" value="1"/>
</dbReference>
<dbReference type="Pfam" id="PF13017">
    <property type="entry name" value="Maelstrom"/>
    <property type="match status" value="1"/>
</dbReference>
<dbReference type="SUPFAM" id="SSF47095">
    <property type="entry name" value="HMG-box"/>
    <property type="match status" value="1"/>
</dbReference>
<gene>
    <name type="primary">mael2</name>
    <name type="ORF">GL13552</name>
</gene>
<reference key="1">
    <citation type="journal article" date="2007" name="Nature">
        <title>Evolution of genes and genomes on the Drosophila phylogeny.</title>
        <authorList>
            <consortium name="Drosophila 12 genomes consortium"/>
        </authorList>
    </citation>
    <scope>NUCLEOTIDE SEQUENCE [LARGE SCALE GENOMIC DNA]</scope>
    <source>
        <strain>MSH-3 / Tucson 14011-0111.49</strain>
    </source>
</reference>
<name>MAEL2_DROPE</name>
<protein>
    <recommendedName>
        <fullName>Protein maelstrom 2</fullName>
    </recommendedName>
</protein>
<feature type="chain" id="PRO_0000367302" description="Protein maelstrom 2">
    <location>
        <begin position="1"/>
        <end position="438"/>
    </location>
</feature>
<feature type="DNA-binding region" description="HMG box">
    <location>
        <begin position="2"/>
        <end position="69"/>
    </location>
</feature>
<feature type="region of interest" description="Disordered" evidence="2">
    <location>
        <begin position="374"/>
        <end position="438"/>
    </location>
</feature>
<feature type="compositionally biased region" description="Polar residues" evidence="2">
    <location>
        <begin position="381"/>
        <end position="391"/>
    </location>
</feature>
<organism>
    <name type="scientific">Drosophila persimilis</name>
    <name type="common">Fruit fly</name>
    <dbReference type="NCBI Taxonomy" id="7234"/>
    <lineage>
        <taxon>Eukaryota</taxon>
        <taxon>Metazoa</taxon>
        <taxon>Ecdysozoa</taxon>
        <taxon>Arthropoda</taxon>
        <taxon>Hexapoda</taxon>
        <taxon>Insecta</taxon>
        <taxon>Pterygota</taxon>
        <taxon>Neoptera</taxon>
        <taxon>Endopterygota</taxon>
        <taxon>Diptera</taxon>
        <taxon>Brachycera</taxon>
        <taxon>Muscomorpha</taxon>
        <taxon>Ephydroidea</taxon>
        <taxon>Drosophilidae</taxon>
        <taxon>Drosophila</taxon>
        <taxon>Sophophora</taxon>
    </lineage>
</organism>